<feature type="chain" id="PRO_0000222177" description="Capsid protein">
    <location>
        <begin position="1"/>
        <end position="251"/>
    </location>
</feature>
<feature type="zinc finger region" evidence="2">
    <location>
        <begin position="63"/>
        <end position="80"/>
    </location>
</feature>
<feature type="region of interest" description="Disordered" evidence="3">
    <location>
        <begin position="1"/>
        <end position="27"/>
    </location>
</feature>
<feature type="short sequence motif" description="Bipartite nuclear localization signal" evidence="2">
    <location>
        <begin position="3"/>
        <end position="20"/>
    </location>
</feature>
<feature type="short sequence motif" description="Nuclear localization signal" evidence="2">
    <location>
        <begin position="35"/>
        <end position="49"/>
    </location>
</feature>
<feature type="short sequence motif" description="Nuclear export signal" evidence="2">
    <location>
        <begin position="96"/>
        <end position="117"/>
    </location>
</feature>
<feature type="short sequence motif" description="Bipartite nuclear localization signal" evidence="2">
    <location>
        <begin position="195"/>
        <end position="242"/>
    </location>
</feature>
<feature type="compositionally biased region" description="Polar residues" evidence="3">
    <location>
        <begin position="12"/>
        <end position="23"/>
    </location>
</feature>
<proteinExistence type="evidence at protein level"/>
<accession>P21942</accession>
<reference key="1">
    <citation type="journal article" date="1990" name="Virology">
        <title>The nucleotide sequence of abutilon mosaic virus reveals prokaryotic as well as eukaryotic features.</title>
        <authorList>
            <person name="Frischmuth T."/>
            <person name="Zimmat G."/>
            <person name="Jeske H."/>
        </authorList>
    </citation>
    <scope>NUCLEOTIDE SEQUENCE [GENOMIC DNA] OF 11-251</scope>
</reference>
<reference key="2">
    <citation type="submission" date="2003-11" db="EMBL/GenBank/DDBJ databases">
        <authorList>
            <person name="Jeske H."/>
        </authorList>
    </citation>
    <scope>SEQUENCE REVISION</scope>
</reference>
<reference key="3">
    <citation type="journal article" date="2004" name="J. Virol.">
        <title>Interaction of DNA with the movement proteins of geminiviruses revisited.</title>
        <authorList>
            <person name="Hehnle S."/>
            <person name="Wege C."/>
            <person name="Jeske H."/>
        </authorList>
    </citation>
    <scope>DNA-BINDING</scope>
</reference>
<sequence length="251" mass="29352">MPKRDLPWRSMPGTSKTSRNANYSPRARIGPRVDKASEWVHRPMYRKPRIYRTLRTADVPRGCEGPCKVQSYEQRHDISHVGKVMCISDVTRGNGITHRVGKRFCVKSVYILGKIWMDENIKLQNHTNSVMFWLVRDRRPYGTPMDFGHVFNMFDNEPSTATVKNDLRDRYQVLHKFYGKVTGGQYASNEQAIVKRFWKVNNHVVYNHQEAGKYENHTENALLLYMACTHASNPVYATLKIRIYFYDSLMN</sequence>
<organismHost>
    <name type="scientific">Abutilon</name>
    <dbReference type="NCBI Taxonomy" id="3630"/>
</organismHost>
<organismHost>
    <name type="scientific">Gossypium hirsutum</name>
    <name type="common">Upland cotton</name>
    <name type="synonym">Gossypium mexicanum</name>
    <dbReference type="NCBI Taxonomy" id="3635"/>
</organismHost>
<organismHost>
    <name type="scientific">Hibiscus</name>
    <dbReference type="NCBI Taxonomy" id="47605"/>
</organismHost>
<organismHost>
    <name type="scientific">Malva</name>
    <dbReference type="NCBI Taxonomy" id="96479"/>
</organismHost>
<organismHost>
    <name type="scientific">Phaseolus vulgaris</name>
    <name type="common">Kidney bean</name>
    <name type="synonym">French bean</name>
    <dbReference type="NCBI Taxonomy" id="3885"/>
</organismHost>
<organismHost>
    <name type="scientific">Sida</name>
    <dbReference type="NCBI Taxonomy" id="108335"/>
</organismHost>
<protein>
    <recommendedName>
        <fullName>Capsid protein</fullName>
    </recommendedName>
    <alternativeName>
        <fullName>Coat protein</fullName>
        <shortName>CP</shortName>
    </alternativeName>
</protein>
<comment type="function">
    <text>Encapsidates the viral DNA into characteristic twinned ('geminate') particles. Binds the genomic viral ssDNA and shuttles it into and out of the cell nucleus. The CP of bipartite geminiviruses is not required for cell-to-cell or systemic movement.</text>
</comment>
<comment type="subunit">
    <text evidence="1">Homomultimer. Binds to single-stranded and double-stranded viral DNA. Interacts (via nuclear localization signals) with host importin alpha-1a (By similarity).</text>
</comment>
<comment type="subcellular location">
    <subcellularLocation>
        <location evidence="4">Virion</location>
    </subcellularLocation>
    <subcellularLocation>
        <location evidence="1">Host nucleus</location>
    </subcellularLocation>
    <text evidence="1">It is actively transported into the host cell nucleus. It may be exported out of the nucleus through a nuclear export signal for cell-to-cell movement and spread (By similarity).</text>
</comment>
<comment type="similarity">
    <text evidence="4">Belongs to the geminiviridae capsid protein family.</text>
</comment>
<organism>
    <name type="scientific">Abutilon mosaic virus (isolate West India)</name>
    <name type="common">AbMV</name>
    <dbReference type="NCBI Taxonomy" id="10816"/>
    <lineage>
        <taxon>Viruses</taxon>
        <taxon>Monodnaviria</taxon>
        <taxon>Shotokuvirae</taxon>
        <taxon>Cressdnaviricota</taxon>
        <taxon>Repensiviricetes</taxon>
        <taxon>Geplafuvirales</taxon>
        <taxon>Geminiviridae</taxon>
        <taxon>Begomovirus</taxon>
        <taxon>Begomovirus bauri</taxon>
    </lineage>
</organism>
<name>CAPSD_ABMVW</name>
<keyword id="KW-0167">Capsid protein</keyword>
<keyword id="KW-0238">DNA-binding</keyword>
<keyword id="KW-1048">Host nucleus</keyword>
<keyword id="KW-0945">Host-virus interaction</keyword>
<keyword id="KW-0479">Metal-binding</keyword>
<keyword id="KW-1185">Reference proteome</keyword>
<keyword id="KW-1140">T=1 icosahedral capsid protein</keyword>
<keyword id="KW-1163">Viral penetration into host nucleus</keyword>
<keyword id="KW-0946">Virion</keyword>
<keyword id="KW-1160">Virus entry into host cell</keyword>
<keyword id="KW-0862">Zinc</keyword>
<keyword id="KW-0863">Zinc-finger</keyword>
<dbReference type="EMBL" id="X15983">
    <property type="protein sequence ID" value="CAA34110.2"/>
    <property type="molecule type" value="Genomic_DNA"/>
</dbReference>
<dbReference type="PIR" id="B36214">
    <property type="entry name" value="QQCVW2"/>
</dbReference>
<dbReference type="SMR" id="P21942"/>
<dbReference type="KEGG" id="vg:956370"/>
<dbReference type="Proteomes" id="UP000006885">
    <property type="component" value="Genome"/>
</dbReference>
<dbReference type="GO" id="GO:0043657">
    <property type="term" value="C:host cell"/>
    <property type="evidence" value="ECO:0007669"/>
    <property type="project" value="GOC"/>
</dbReference>
<dbReference type="GO" id="GO:0042025">
    <property type="term" value="C:host cell nucleus"/>
    <property type="evidence" value="ECO:0007669"/>
    <property type="project" value="UniProtKB-SubCell"/>
</dbReference>
<dbReference type="GO" id="GO:0039615">
    <property type="term" value="C:T=1 icosahedral viral capsid"/>
    <property type="evidence" value="ECO:0007669"/>
    <property type="project" value="UniProtKB-KW"/>
</dbReference>
<dbReference type="GO" id="GO:0003677">
    <property type="term" value="F:DNA binding"/>
    <property type="evidence" value="ECO:0007669"/>
    <property type="project" value="UniProtKB-KW"/>
</dbReference>
<dbReference type="GO" id="GO:0005198">
    <property type="term" value="F:structural molecule activity"/>
    <property type="evidence" value="ECO:0007669"/>
    <property type="project" value="InterPro"/>
</dbReference>
<dbReference type="GO" id="GO:0008270">
    <property type="term" value="F:zinc ion binding"/>
    <property type="evidence" value="ECO:0007669"/>
    <property type="project" value="UniProtKB-KW"/>
</dbReference>
<dbReference type="GO" id="GO:0046718">
    <property type="term" value="P:symbiont entry into host cell"/>
    <property type="evidence" value="ECO:0007669"/>
    <property type="project" value="UniProtKB-KW"/>
</dbReference>
<dbReference type="GO" id="GO:0075732">
    <property type="term" value="P:viral penetration into host nucleus"/>
    <property type="evidence" value="ECO:0007669"/>
    <property type="project" value="UniProtKB-KW"/>
</dbReference>
<dbReference type="Gene3D" id="2.60.120.20">
    <property type="match status" value="1"/>
</dbReference>
<dbReference type="InterPro" id="IPR000650">
    <property type="entry name" value="Gem_coat_AR1"/>
</dbReference>
<dbReference type="InterPro" id="IPR000263">
    <property type="entry name" value="GV_A/BR1_coat"/>
</dbReference>
<dbReference type="InterPro" id="IPR029053">
    <property type="entry name" value="Viral_coat"/>
</dbReference>
<dbReference type="Pfam" id="PF00844">
    <property type="entry name" value="Gemini_coat"/>
    <property type="match status" value="1"/>
</dbReference>
<dbReference type="PRINTS" id="PR00224">
    <property type="entry name" value="GEMCOATAR1"/>
</dbReference>
<dbReference type="PRINTS" id="PR00223">
    <property type="entry name" value="GEMCOATARBR1"/>
</dbReference>
<gene>
    <name type="ORF">AR1</name>
    <name type="ORF">AV1</name>
</gene>
<evidence type="ECO:0000250" key="1"/>
<evidence type="ECO:0000255" key="2"/>
<evidence type="ECO:0000256" key="3">
    <source>
        <dbReference type="SAM" id="MobiDB-lite"/>
    </source>
</evidence>
<evidence type="ECO:0000305" key="4"/>